<proteinExistence type="inferred from homology"/>
<sequence length="685" mass="76682">MAETNHSKRISELRSLLNKANHAYYILDSPLIEDAVFDRLYRELIELEKQYPSLVTPDSPSQRLGNKPATKFESIKHRIPLQSLDNAFNFDELNYWHSRMQKHLKSHSAMVCELKIDGNALALSYVNGVLTRGATRGDGAEGEEITANVKTIVSIPLSLHLQNPPAWVEIRGEAFIPNKVFISLNKERLKEEKQLFANPRNACSGTLRQLDSRIVASRHLDFFAYTIHLPDDWIPGETDPKKPKGQWEALLWLKAAGFRVNPNAKLISQPDQVEKFCIDWEKRRHQLPYTTDGIVIKIDDFKLQKTLGITQKAPRWAIALKYPAEEAPTQLNKLIFQTGRTGTVTPVAEFNPIPLGGTLVSKATLHNANRLSELDIHEGDTIVIRKAGEIIPEVIRVIKELRPNNAKKLVLPEKCPECNSKLLKETGEAATKCLNNDCPAILRGVLRHWVSKGAMNIDGFGTKLVEQLVKRKIIKSIAGIYELKEKNLENLERMGTKSAEKLLIEINNSKKQPWHKQLYGLGILHIGEANAKAIAEVFPSISLLADAAIASPESISNIYGIGSEITESLHKWFNCSINQNLIKELKDLGIALERVNEEGAIDNILMQEKLQFSGKTFVITGTMPSLSRANLEELIEREGGKVNSSVSSKTNYLVAGEKPGNKLKKAKELGIKVINEQELMTLISN</sequence>
<feature type="chain" id="PRO_0000313364" description="DNA ligase">
    <location>
        <begin position="1"/>
        <end position="685"/>
    </location>
</feature>
<feature type="domain" description="BRCT" evidence="1">
    <location>
        <begin position="607"/>
        <end position="685"/>
    </location>
</feature>
<feature type="active site" description="N6-AMP-lysine intermediate" evidence="1">
    <location>
        <position position="115"/>
    </location>
</feature>
<feature type="binding site" evidence="1">
    <location>
        <begin position="34"/>
        <end position="38"/>
    </location>
    <ligand>
        <name>NAD(+)</name>
        <dbReference type="ChEBI" id="CHEBI:57540"/>
    </ligand>
</feature>
<feature type="binding site" evidence="1">
    <location>
        <begin position="83"/>
        <end position="84"/>
    </location>
    <ligand>
        <name>NAD(+)</name>
        <dbReference type="ChEBI" id="CHEBI:57540"/>
    </ligand>
</feature>
<feature type="binding site" evidence="1">
    <location>
        <position position="113"/>
    </location>
    <ligand>
        <name>NAD(+)</name>
        <dbReference type="ChEBI" id="CHEBI:57540"/>
    </ligand>
</feature>
<feature type="binding site" evidence="1">
    <location>
        <position position="136"/>
    </location>
    <ligand>
        <name>NAD(+)</name>
        <dbReference type="ChEBI" id="CHEBI:57540"/>
    </ligand>
</feature>
<feature type="binding site" evidence="1">
    <location>
        <position position="173"/>
    </location>
    <ligand>
        <name>NAD(+)</name>
        <dbReference type="ChEBI" id="CHEBI:57540"/>
    </ligand>
</feature>
<feature type="binding site" evidence="1">
    <location>
        <position position="297"/>
    </location>
    <ligand>
        <name>NAD(+)</name>
        <dbReference type="ChEBI" id="CHEBI:57540"/>
    </ligand>
</feature>
<feature type="binding site" evidence="1">
    <location>
        <position position="321"/>
    </location>
    <ligand>
        <name>NAD(+)</name>
        <dbReference type="ChEBI" id="CHEBI:57540"/>
    </ligand>
</feature>
<feature type="binding site" evidence="1">
    <location>
        <position position="415"/>
    </location>
    <ligand>
        <name>Zn(2+)</name>
        <dbReference type="ChEBI" id="CHEBI:29105"/>
    </ligand>
</feature>
<feature type="binding site" evidence="1">
    <location>
        <position position="418"/>
    </location>
    <ligand>
        <name>Zn(2+)</name>
        <dbReference type="ChEBI" id="CHEBI:29105"/>
    </ligand>
</feature>
<feature type="binding site" evidence="1">
    <location>
        <position position="433"/>
    </location>
    <ligand>
        <name>Zn(2+)</name>
        <dbReference type="ChEBI" id="CHEBI:29105"/>
    </ligand>
</feature>
<feature type="binding site" evidence="1">
    <location>
        <position position="438"/>
    </location>
    <ligand>
        <name>Zn(2+)</name>
        <dbReference type="ChEBI" id="CHEBI:29105"/>
    </ligand>
</feature>
<accession>Q7V9J2</accession>
<organism>
    <name type="scientific">Prochlorococcus marinus (strain SARG / CCMP1375 / SS120)</name>
    <dbReference type="NCBI Taxonomy" id="167539"/>
    <lineage>
        <taxon>Bacteria</taxon>
        <taxon>Bacillati</taxon>
        <taxon>Cyanobacteriota</taxon>
        <taxon>Cyanophyceae</taxon>
        <taxon>Synechococcales</taxon>
        <taxon>Prochlorococcaceae</taxon>
        <taxon>Prochlorococcus</taxon>
    </lineage>
</organism>
<comment type="function">
    <text evidence="1">DNA ligase that catalyzes the formation of phosphodiester linkages between 5'-phosphoryl and 3'-hydroxyl groups in double-stranded DNA using NAD as a coenzyme and as the energy source for the reaction. It is essential for DNA replication and repair of damaged DNA.</text>
</comment>
<comment type="catalytic activity">
    <reaction evidence="1">
        <text>NAD(+) + (deoxyribonucleotide)n-3'-hydroxyl + 5'-phospho-(deoxyribonucleotide)m = (deoxyribonucleotide)n+m + AMP + beta-nicotinamide D-nucleotide.</text>
        <dbReference type="EC" id="6.5.1.2"/>
    </reaction>
</comment>
<comment type="cofactor">
    <cofactor evidence="1">
        <name>Mg(2+)</name>
        <dbReference type="ChEBI" id="CHEBI:18420"/>
    </cofactor>
    <cofactor evidence="1">
        <name>Mn(2+)</name>
        <dbReference type="ChEBI" id="CHEBI:29035"/>
    </cofactor>
</comment>
<comment type="similarity">
    <text evidence="1">Belongs to the NAD-dependent DNA ligase family. LigA subfamily.</text>
</comment>
<name>DNLJ_PROMA</name>
<gene>
    <name evidence="1" type="primary">ligA</name>
    <name type="ordered locus">Pro_1841</name>
</gene>
<protein>
    <recommendedName>
        <fullName evidence="1">DNA ligase</fullName>
        <ecNumber evidence="1">6.5.1.2</ecNumber>
    </recommendedName>
    <alternativeName>
        <fullName evidence="1">Polydeoxyribonucleotide synthase [NAD(+)]</fullName>
    </alternativeName>
</protein>
<dbReference type="EC" id="6.5.1.2" evidence="1"/>
<dbReference type="EMBL" id="AE017126">
    <property type="protein sequence ID" value="AAQ00885.1"/>
    <property type="molecule type" value="Genomic_DNA"/>
</dbReference>
<dbReference type="RefSeq" id="NP_876232.1">
    <property type="nucleotide sequence ID" value="NC_005042.1"/>
</dbReference>
<dbReference type="RefSeq" id="WP_011125990.1">
    <property type="nucleotide sequence ID" value="NC_005042.1"/>
</dbReference>
<dbReference type="SMR" id="Q7V9J2"/>
<dbReference type="STRING" id="167539.Pro_1841"/>
<dbReference type="EnsemblBacteria" id="AAQ00885">
    <property type="protein sequence ID" value="AAQ00885"/>
    <property type="gene ID" value="Pro_1841"/>
</dbReference>
<dbReference type="KEGG" id="pma:Pro_1841"/>
<dbReference type="PATRIC" id="fig|167539.5.peg.1943"/>
<dbReference type="eggNOG" id="COG0272">
    <property type="taxonomic scope" value="Bacteria"/>
</dbReference>
<dbReference type="HOGENOM" id="CLU_007764_2_1_3"/>
<dbReference type="OrthoDB" id="9759736at2"/>
<dbReference type="Proteomes" id="UP000001420">
    <property type="component" value="Chromosome"/>
</dbReference>
<dbReference type="GO" id="GO:0005829">
    <property type="term" value="C:cytosol"/>
    <property type="evidence" value="ECO:0007669"/>
    <property type="project" value="TreeGrafter"/>
</dbReference>
<dbReference type="GO" id="GO:0003677">
    <property type="term" value="F:DNA binding"/>
    <property type="evidence" value="ECO:0007669"/>
    <property type="project" value="InterPro"/>
</dbReference>
<dbReference type="GO" id="GO:0003911">
    <property type="term" value="F:DNA ligase (NAD+) activity"/>
    <property type="evidence" value="ECO:0007669"/>
    <property type="project" value="UniProtKB-UniRule"/>
</dbReference>
<dbReference type="GO" id="GO:0046872">
    <property type="term" value="F:metal ion binding"/>
    <property type="evidence" value="ECO:0007669"/>
    <property type="project" value="UniProtKB-KW"/>
</dbReference>
<dbReference type="GO" id="GO:0006281">
    <property type="term" value="P:DNA repair"/>
    <property type="evidence" value="ECO:0007669"/>
    <property type="project" value="UniProtKB-KW"/>
</dbReference>
<dbReference type="GO" id="GO:0006260">
    <property type="term" value="P:DNA replication"/>
    <property type="evidence" value="ECO:0007669"/>
    <property type="project" value="UniProtKB-KW"/>
</dbReference>
<dbReference type="CDD" id="cd17748">
    <property type="entry name" value="BRCT_DNA_ligase_like"/>
    <property type="match status" value="1"/>
</dbReference>
<dbReference type="CDD" id="cd00114">
    <property type="entry name" value="LIGANc"/>
    <property type="match status" value="1"/>
</dbReference>
<dbReference type="FunFam" id="1.10.150.20:FF:000007">
    <property type="entry name" value="DNA ligase"/>
    <property type="match status" value="1"/>
</dbReference>
<dbReference type="FunFam" id="3.30.470.30:FF:000001">
    <property type="entry name" value="DNA ligase"/>
    <property type="match status" value="1"/>
</dbReference>
<dbReference type="Gene3D" id="6.20.10.30">
    <property type="match status" value="1"/>
</dbReference>
<dbReference type="Gene3D" id="1.10.150.20">
    <property type="entry name" value="5' to 3' exonuclease, C-terminal subdomain"/>
    <property type="match status" value="2"/>
</dbReference>
<dbReference type="Gene3D" id="3.40.50.10190">
    <property type="entry name" value="BRCT domain"/>
    <property type="match status" value="1"/>
</dbReference>
<dbReference type="Gene3D" id="3.30.470.30">
    <property type="entry name" value="DNA ligase/mRNA capping enzyme"/>
    <property type="match status" value="1"/>
</dbReference>
<dbReference type="Gene3D" id="1.10.287.610">
    <property type="entry name" value="Helix hairpin bin"/>
    <property type="match status" value="1"/>
</dbReference>
<dbReference type="Gene3D" id="2.40.50.140">
    <property type="entry name" value="Nucleic acid-binding proteins"/>
    <property type="match status" value="1"/>
</dbReference>
<dbReference type="HAMAP" id="MF_01588">
    <property type="entry name" value="DNA_ligase_A"/>
    <property type="match status" value="1"/>
</dbReference>
<dbReference type="InterPro" id="IPR001357">
    <property type="entry name" value="BRCT_dom"/>
</dbReference>
<dbReference type="InterPro" id="IPR036420">
    <property type="entry name" value="BRCT_dom_sf"/>
</dbReference>
<dbReference type="InterPro" id="IPR041663">
    <property type="entry name" value="DisA/LigA_HHH"/>
</dbReference>
<dbReference type="InterPro" id="IPR001679">
    <property type="entry name" value="DNA_ligase"/>
</dbReference>
<dbReference type="InterPro" id="IPR013839">
    <property type="entry name" value="DNAligase_adenylation"/>
</dbReference>
<dbReference type="InterPro" id="IPR013840">
    <property type="entry name" value="DNAligase_N"/>
</dbReference>
<dbReference type="InterPro" id="IPR003583">
    <property type="entry name" value="Hlx-hairpin-Hlx_DNA-bd_motif"/>
</dbReference>
<dbReference type="InterPro" id="IPR012340">
    <property type="entry name" value="NA-bd_OB-fold"/>
</dbReference>
<dbReference type="InterPro" id="IPR004150">
    <property type="entry name" value="NAD_DNA_ligase_OB"/>
</dbReference>
<dbReference type="InterPro" id="IPR010994">
    <property type="entry name" value="RuvA_2-like"/>
</dbReference>
<dbReference type="InterPro" id="IPR004149">
    <property type="entry name" value="Znf_DNAligase_C4"/>
</dbReference>
<dbReference type="NCBIfam" id="TIGR00575">
    <property type="entry name" value="dnlj"/>
    <property type="match status" value="1"/>
</dbReference>
<dbReference type="NCBIfam" id="NF005932">
    <property type="entry name" value="PRK07956.1"/>
    <property type="match status" value="1"/>
</dbReference>
<dbReference type="PANTHER" id="PTHR23389">
    <property type="entry name" value="CHROMOSOME TRANSMISSION FIDELITY FACTOR 18"/>
    <property type="match status" value="1"/>
</dbReference>
<dbReference type="PANTHER" id="PTHR23389:SF9">
    <property type="entry name" value="DNA LIGASE"/>
    <property type="match status" value="1"/>
</dbReference>
<dbReference type="Pfam" id="PF00533">
    <property type="entry name" value="BRCT"/>
    <property type="match status" value="1"/>
</dbReference>
<dbReference type="Pfam" id="PF01653">
    <property type="entry name" value="DNA_ligase_aden"/>
    <property type="match status" value="1"/>
</dbReference>
<dbReference type="Pfam" id="PF03120">
    <property type="entry name" value="DNA_ligase_OB"/>
    <property type="match status" value="1"/>
</dbReference>
<dbReference type="Pfam" id="PF03119">
    <property type="entry name" value="DNA_ligase_ZBD"/>
    <property type="match status" value="1"/>
</dbReference>
<dbReference type="Pfam" id="PF12826">
    <property type="entry name" value="HHH_2"/>
    <property type="match status" value="1"/>
</dbReference>
<dbReference type="Pfam" id="PF22745">
    <property type="entry name" value="Nlig-Ia"/>
    <property type="match status" value="1"/>
</dbReference>
<dbReference type="PIRSF" id="PIRSF001604">
    <property type="entry name" value="LigA"/>
    <property type="match status" value="1"/>
</dbReference>
<dbReference type="SMART" id="SM00292">
    <property type="entry name" value="BRCT"/>
    <property type="match status" value="1"/>
</dbReference>
<dbReference type="SMART" id="SM00278">
    <property type="entry name" value="HhH1"/>
    <property type="match status" value="3"/>
</dbReference>
<dbReference type="SMART" id="SM00532">
    <property type="entry name" value="LIGANc"/>
    <property type="match status" value="1"/>
</dbReference>
<dbReference type="SUPFAM" id="SSF52113">
    <property type="entry name" value="BRCT domain"/>
    <property type="match status" value="1"/>
</dbReference>
<dbReference type="SUPFAM" id="SSF56091">
    <property type="entry name" value="DNA ligase/mRNA capping enzyme, catalytic domain"/>
    <property type="match status" value="1"/>
</dbReference>
<dbReference type="SUPFAM" id="SSF50249">
    <property type="entry name" value="Nucleic acid-binding proteins"/>
    <property type="match status" value="1"/>
</dbReference>
<dbReference type="SUPFAM" id="SSF47781">
    <property type="entry name" value="RuvA domain 2-like"/>
    <property type="match status" value="1"/>
</dbReference>
<dbReference type="PROSITE" id="PS50172">
    <property type="entry name" value="BRCT"/>
    <property type="match status" value="1"/>
</dbReference>
<reference key="1">
    <citation type="journal article" date="2003" name="Proc. Natl. Acad. Sci. U.S.A.">
        <title>Genome sequence of the cyanobacterium Prochlorococcus marinus SS120, a nearly minimal oxyphototrophic genome.</title>
        <authorList>
            <person name="Dufresne A."/>
            <person name="Salanoubat M."/>
            <person name="Partensky F."/>
            <person name="Artiguenave F."/>
            <person name="Axmann I.M."/>
            <person name="Barbe V."/>
            <person name="Duprat S."/>
            <person name="Galperin M.Y."/>
            <person name="Koonin E.V."/>
            <person name="Le Gall F."/>
            <person name="Makarova K.S."/>
            <person name="Ostrowski M."/>
            <person name="Oztas S."/>
            <person name="Robert C."/>
            <person name="Rogozin I.B."/>
            <person name="Scanlan D.J."/>
            <person name="Tandeau de Marsac N."/>
            <person name="Weissenbach J."/>
            <person name="Wincker P."/>
            <person name="Wolf Y.I."/>
            <person name="Hess W.R."/>
        </authorList>
    </citation>
    <scope>NUCLEOTIDE SEQUENCE [LARGE SCALE GENOMIC DNA]</scope>
    <source>
        <strain>SARG / CCMP1375 / SS120</strain>
    </source>
</reference>
<keyword id="KW-0227">DNA damage</keyword>
<keyword id="KW-0234">DNA repair</keyword>
<keyword id="KW-0235">DNA replication</keyword>
<keyword id="KW-0436">Ligase</keyword>
<keyword id="KW-0460">Magnesium</keyword>
<keyword id="KW-0464">Manganese</keyword>
<keyword id="KW-0479">Metal-binding</keyword>
<keyword id="KW-0520">NAD</keyword>
<keyword id="KW-1185">Reference proteome</keyword>
<keyword id="KW-0862">Zinc</keyword>
<evidence type="ECO:0000255" key="1">
    <source>
        <dbReference type="HAMAP-Rule" id="MF_01588"/>
    </source>
</evidence>